<protein>
    <recommendedName>
        <fullName evidence="1">Small ribosomal subunit protein uS17</fullName>
    </recommendedName>
    <alternativeName>
        <fullName evidence="2">30S ribosomal protein S17</fullName>
    </alternativeName>
</protein>
<proteinExistence type="inferred from homology"/>
<organism>
    <name type="scientific">Leifsonia xyli subsp. xyli (strain CTCB07)</name>
    <dbReference type="NCBI Taxonomy" id="281090"/>
    <lineage>
        <taxon>Bacteria</taxon>
        <taxon>Bacillati</taxon>
        <taxon>Actinomycetota</taxon>
        <taxon>Actinomycetes</taxon>
        <taxon>Micrococcales</taxon>
        <taxon>Microbacteriaceae</taxon>
        <taxon>Leifsonia</taxon>
    </lineage>
</organism>
<evidence type="ECO:0000255" key="1">
    <source>
        <dbReference type="HAMAP-Rule" id="MF_01345"/>
    </source>
</evidence>
<evidence type="ECO:0000305" key="2"/>
<comment type="function">
    <text evidence="1">One of the primary rRNA binding proteins, it binds specifically to the 5'-end of 16S ribosomal RNA.</text>
</comment>
<comment type="subunit">
    <text evidence="1">Part of the 30S ribosomal subunit.</text>
</comment>
<comment type="similarity">
    <text evidence="1">Belongs to the universal ribosomal protein uS17 family.</text>
</comment>
<gene>
    <name evidence="1" type="primary">rpsQ</name>
    <name type="ordered locus">Lxx20240</name>
</gene>
<accession>Q6AD04</accession>
<reference key="1">
    <citation type="journal article" date="2004" name="Mol. Plant Microbe Interact.">
        <title>The genome sequence of the Gram-positive sugarcane pathogen Leifsonia xyli subsp. xyli.</title>
        <authorList>
            <person name="Monteiro-Vitorello C.B."/>
            <person name="Camargo L.E.A."/>
            <person name="Van Sluys M.A."/>
            <person name="Kitajima J.P."/>
            <person name="Truffi D."/>
            <person name="do Amaral A.M."/>
            <person name="Harakava R."/>
            <person name="de Oliveira J.C.F."/>
            <person name="Wood D."/>
            <person name="de Oliveira M.C."/>
            <person name="Miyaki C.Y."/>
            <person name="Takita M.A."/>
            <person name="da Silva A.C.R."/>
            <person name="Furlan L.R."/>
            <person name="Carraro D.M."/>
            <person name="Camarotte G."/>
            <person name="Almeida N.F. Jr."/>
            <person name="Carrer H."/>
            <person name="Coutinho L.L."/>
            <person name="El-Dorry H.A."/>
            <person name="Ferro M.I.T."/>
            <person name="Gagliardi P.R."/>
            <person name="Giglioti E."/>
            <person name="Goldman M.H.S."/>
            <person name="Goldman G.H."/>
            <person name="Kimura E.T."/>
            <person name="Ferro E.S."/>
            <person name="Kuramae E.E."/>
            <person name="Lemos E.G.M."/>
            <person name="Lemos M.V.F."/>
            <person name="Mauro S.M.Z."/>
            <person name="Machado M.A."/>
            <person name="Marino C.L."/>
            <person name="Menck C.F."/>
            <person name="Nunes L.R."/>
            <person name="Oliveira R.C."/>
            <person name="Pereira G.G."/>
            <person name="Siqueira W."/>
            <person name="de Souza A.A."/>
            <person name="Tsai S.M."/>
            <person name="Zanca A.S."/>
            <person name="Simpson A.J.G."/>
            <person name="Brumbley S.M."/>
            <person name="Setubal J.C."/>
        </authorList>
    </citation>
    <scope>NUCLEOTIDE SEQUENCE [LARGE SCALE GENOMIC DNA]</scope>
    <source>
        <strain>CTCB07</strain>
    </source>
</reference>
<name>RS17_LEIXX</name>
<keyword id="KW-1185">Reference proteome</keyword>
<keyword id="KW-0687">Ribonucleoprotein</keyword>
<keyword id="KW-0689">Ribosomal protein</keyword>
<keyword id="KW-0694">RNA-binding</keyword>
<keyword id="KW-0699">rRNA-binding</keyword>
<dbReference type="EMBL" id="AE016822">
    <property type="protein sequence ID" value="AAT89740.1"/>
    <property type="molecule type" value="Genomic_DNA"/>
</dbReference>
<dbReference type="RefSeq" id="WP_011186726.1">
    <property type="nucleotide sequence ID" value="NC_006087.1"/>
</dbReference>
<dbReference type="SMR" id="Q6AD04"/>
<dbReference type="STRING" id="281090.Lxx20240"/>
<dbReference type="KEGG" id="lxx:Lxx20240"/>
<dbReference type="eggNOG" id="COG0186">
    <property type="taxonomic scope" value="Bacteria"/>
</dbReference>
<dbReference type="HOGENOM" id="CLU_073626_1_0_11"/>
<dbReference type="Proteomes" id="UP000001306">
    <property type="component" value="Chromosome"/>
</dbReference>
<dbReference type="GO" id="GO:0022627">
    <property type="term" value="C:cytosolic small ribosomal subunit"/>
    <property type="evidence" value="ECO:0007669"/>
    <property type="project" value="TreeGrafter"/>
</dbReference>
<dbReference type="GO" id="GO:0019843">
    <property type="term" value="F:rRNA binding"/>
    <property type="evidence" value="ECO:0007669"/>
    <property type="project" value="UniProtKB-UniRule"/>
</dbReference>
<dbReference type="GO" id="GO:0003735">
    <property type="term" value="F:structural constituent of ribosome"/>
    <property type="evidence" value="ECO:0007669"/>
    <property type="project" value="InterPro"/>
</dbReference>
<dbReference type="GO" id="GO:0006412">
    <property type="term" value="P:translation"/>
    <property type="evidence" value="ECO:0007669"/>
    <property type="project" value="UniProtKB-UniRule"/>
</dbReference>
<dbReference type="CDD" id="cd00364">
    <property type="entry name" value="Ribosomal_uS17"/>
    <property type="match status" value="1"/>
</dbReference>
<dbReference type="Gene3D" id="2.40.50.140">
    <property type="entry name" value="Nucleic acid-binding proteins"/>
    <property type="match status" value="1"/>
</dbReference>
<dbReference type="HAMAP" id="MF_01345_B">
    <property type="entry name" value="Ribosomal_uS17_B"/>
    <property type="match status" value="1"/>
</dbReference>
<dbReference type="InterPro" id="IPR012340">
    <property type="entry name" value="NA-bd_OB-fold"/>
</dbReference>
<dbReference type="InterPro" id="IPR000266">
    <property type="entry name" value="Ribosomal_uS17"/>
</dbReference>
<dbReference type="InterPro" id="IPR019984">
    <property type="entry name" value="Ribosomal_uS17_bact/chlr"/>
</dbReference>
<dbReference type="InterPro" id="IPR019979">
    <property type="entry name" value="Ribosomal_uS17_CS"/>
</dbReference>
<dbReference type="NCBIfam" id="NF004123">
    <property type="entry name" value="PRK05610.1"/>
    <property type="match status" value="1"/>
</dbReference>
<dbReference type="NCBIfam" id="TIGR03635">
    <property type="entry name" value="uS17_bact"/>
    <property type="match status" value="1"/>
</dbReference>
<dbReference type="PANTHER" id="PTHR10744">
    <property type="entry name" value="40S RIBOSOMAL PROTEIN S11 FAMILY MEMBER"/>
    <property type="match status" value="1"/>
</dbReference>
<dbReference type="PANTHER" id="PTHR10744:SF1">
    <property type="entry name" value="SMALL RIBOSOMAL SUBUNIT PROTEIN US17M"/>
    <property type="match status" value="1"/>
</dbReference>
<dbReference type="Pfam" id="PF00366">
    <property type="entry name" value="Ribosomal_S17"/>
    <property type="match status" value="1"/>
</dbReference>
<dbReference type="PRINTS" id="PR00973">
    <property type="entry name" value="RIBOSOMALS17"/>
</dbReference>
<dbReference type="SUPFAM" id="SSF50249">
    <property type="entry name" value="Nucleic acid-binding proteins"/>
    <property type="match status" value="1"/>
</dbReference>
<dbReference type="PROSITE" id="PS00056">
    <property type="entry name" value="RIBOSOMAL_S17"/>
    <property type="match status" value="1"/>
</dbReference>
<sequence>MAETTKATAAEPAADEALVRGYRKARRGYVVSDKMDKTIVVEVEDRVKHPLYGKVLRRTSKVKAHDESNVAGIGDLVLINETRPLSASKRWRLVEILEKAK</sequence>
<feature type="chain" id="PRO_0000233498" description="Small ribosomal subunit protein uS17">
    <location>
        <begin position="1"/>
        <end position="101"/>
    </location>
</feature>